<sequence>MSLIRTILKLVVVVGFLSLTVQFIRHWMANKQYVFTKEEVAKLAKQYAGQDHEQAFSKVVVELRRRYPGHILPDEDLQWVFVNAGGWMGSMCLLHASLTEYVLLFGTAVDTGGHSGRYWAEISDTIISGTFRQWKEGTTKSETYYPGDTIVHSAGEATSVQWSSGTWMVEYGRGFIPSTLGFALADTMFSTQDFLTLFYTARVYVKGMILEASTFLTESGVL</sequence>
<accession>Q7ZWG9</accession>
<dbReference type="EMBL" id="BC049416">
    <property type="protein sequence ID" value="AAH49416.1"/>
    <property type="molecule type" value="mRNA"/>
</dbReference>
<dbReference type="RefSeq" id="NP_957271.1">
    <property type="nucleotide sequence ID" value="NM_200977.1"/>
</dbReference>
<dbReference type="SMR" id="Q7ZWG9"/>
<dbReference type="FunCoup" id="Q7ZWG9">
    <property type="interactions" value="518"/>
</dbReference>
<dbReference type="STRING" id="7955.ENSDARP00000011354"/>
<dbReference type="PaxDb" id="7955-ENSDARP00000011354"/>
<dbReference type="GeneID" id="393952"/>
<dbReference type="KEGG" id="dre:393952"/>
<dbReference type="AGR" id="ZFIN:ZDB-GENE-040426-1006"/>
<dbReference type="CTD" id="10280"/>
<dbReference type="ZFIN" id="ZDB-GENE-040426-1006">
    <property type="gene designation" value="sigmar1"/>
</dbReference>
<dbReference type="eggNOG" id="KOG4143">
    <property type="taxonomic scope" value="Eukaryota"/>
</dbReference>
<dbReference type="InParanoid" id="Q7ZWG9"/>
<dbReference type="OrthoDB" id="347124at2759"/>
<dbReference type="PhylomeDB" id="Q7ZWG9"/>
<dbReference type="PRO" id="PR:Q7ZWG9"/>
<dbReference type="Proteomes" id="UP000000437">
    <property type="component" value="Chromosome 10"/>
</dbReference>
<dbReference type="GO" id="GO:0031410">
    <property type="term" value="C:cytoplasmic vesicle"/>
    <property type="evidence" value="ECO:0007669"/>
    <property type="project" value="UniProtKB-KW"/>
</dbReference>
<dbReference type="GO" id="GO:0005783">
    <property type="term" value="C:endoplasmic reticulum"/>
    <property type="evidence" value="ECO:0000318"/>
    <property type="project" value="GO_Central"/>
</dbReference>
<dbReference type="GO" id="GO:0005789">
    <property type="term" value="C:endoplasmic reticulum membrane"/>
    <property type="evidence" value="ECO:0007669"/>
    <property type="project" value="UniProtKB-SubCell"/>
</dbReference>
<dbReference type="GO" id="GO:0016020">
    <property type="term" value="C:membrane"/>
    <property type="evidence" value="ECO:0000250"/>
    <property type="project" value="UniProtKB"/>
</dbReference>
<dbReference type="GO" id="GO:0005637">
    <property type="term" value="C:nuclear inner membrane"/>
    <property type="evidence" value="ECO:0007669"/>
    <property type="project" value="UniProtKB-SubCell"/>
</dbReference>
<dbReference type="GO" id="GO:0005640">
    <property type="term" value="C:nuclear outer membrane"/>
    <property type="evidence" value="ECO:0007669"/>
    <property type="project" value="UniProtKB-SubCell"/>
</dbReference>
<dbReference type="GO" id="GO:0006869">
    <property type="term" value="P:lipid transport"/>
    <property type="evidence" value="ECO:0007669"/>
    <property type="project" value="UniProtKB-KW"/>
</dbReference>
<dbReference type="GO" id="GO:0043457">
    <property type="term" value="P:regulation of cellular respiration"/>
    <property type="evidence" value="ECO:0000315"/>
    <property type="project" value="ZFIN"/>
</dbReference>
<dbReference type="GO" id="GO:1905897">
    <property type="term" value="P:regulation of response to endoplasmic reticulum stress"/>
    <property type="evidence" value="ECO:0000315"/>
    <property type="project" value="ZFIN"/>
</dbReference>
<dbReference type="GO" id="GO:0009611">
    <property type="term" value="P:response to wounding"/>
    <property type="evidence" value="ECO:0000315"/>
    <property type="project" value="ZFIN"/>
</dbReference>
<dbReference type="GO" id="GO:0046548">
    <property type="term" value="P:retinal rod cell development"/>
    <property type="evidence" value="ECO:0000315"/>
    <property type="project" value="ZFIN"/>
</dbReference>
<dbReference type="GO" id="GO:0036269">
    <property type="term" value="P:swimming behavior"/>
    <property type="evidence" value="ECO:0000315"/>
    <property type="project" value="ZFIN"/>
</dbReference>
<dbReference type="InterPro" id="IPR006716">
    <property type="entry name" value="ERG2_sigma1_rcpt-like"/>
</dbReference>
<dbReference type="PANTHER" id="PTHR10868">
    <property type="entry name" value="SIGMA 1-TYPE OPIOID RECEPTOR-RELATED"/>
    <property type="match status" value="1"/>
</dbReference>
<dbReference type="PANTHER" id="PTHR10868:SF1">
    <property type="entry name" value="SIGMA NON-OPIOID INTRACELLULAR RECEPTOR 1"/>
    <property type="match status" value="1"/>
</dbReference>
<dbReference type="Pfam" id="PF04622">
    <property type="entry name" value="ERG2_Sigma1R"/>
    <property type="match status" value="1"/>
</dbReference>
<protein>
    <recommendedName>
        <fullName>Sigma non-opioid intracellular receptor 1</fullName>
    </recommendedName>
    <alternativeName>
        <fullName>Sigma 1-type opioid receptor</fullName>
        <shortName>Sigma1-receptor</shortName>
        <shortName>Sigma1R</shortName>
    </alternativeName>
</protein>
<reference key="1">
    <citation type="submission" date="2003-03" db="EMBL/GenBank/DDBJ databases">
        <authorList>
            <consortium name="NIH - Zebrafish Gene Collection (ZGC) project"/>
        </authorList>
    </citation>
    <scope>NUCLEOTIDE SEQUENCE [LARGE SCALE MRNA]</scope>
    <source>
        <strain>SJD</strain>
    </source>
</reference>
<organism>
    <name type="scientific">Danio rerio</name>
    <name type="common">Zebrafish</name>
    <name type="synonym">Brachydanio rerio</name>
    <dbReference type="NCBI Taxonomy" id="7955"/>
    <lineage>
        <taxon>Eukaryota</taxon>
        <taxon>Metazoa</taxon>
        <taxon>Chordata</taxon>
        <taxon>Craniata</taxon>
        <taxon>Vertebrata</taxon>
        <taxon>Euteleostomi</taxon>
        <taxon>Actinopterygii</taxon>
        <taxon>Neopterygii</taxon>
        <taxon>Teleostei</taxon>
        <taxon>Ostariophysi</taxon>
        <taxon>Cypriniformes</taxon>
        <taxon>Danionidae</taxon>
        <taxon>Danioninae</taxon>
        <taxon>Danio</taxon>
    </lineage>
</organism>
<evidence type="ECO:0000250" key="1"/>
<evidence type="ECO:0000250" key="2">
    <source>
        <dbReference type="UniProtKB" id="O55242"/>
    </source>
</evidence>
<evidence type="ECO:0000250" key="3">
    <source>
        <dbReference type="UniProtKB" id="Q5BJF2"/>
    </source>
</evidence>
<evidence type="ECO:0000250" key="4">
    <source>
        <dbReference type="UniProtKB" id="Q60492"/>
    </source>
</evidence>
<evidence type="ECO:0000250" key="5">
    <source>
        <dbReference type="UniProtKB" id="Q99720"/>
    </source>
</evidence>
<evidence type="ECO:0000305" key="6"/>
<keyword id="KW-0968">Cytoplasmic vesicle</keyword>
<keyword id="KW-0256">Endoplasmic reticulum</keyword>
<keyword id="KW-0445">Lipid transport</keyword>
<keyword id="KW-0472">Membrane</keyword>
<keyword id="KW-0539">Nucleus</keyword>
<keyword id="KW-0675">Receptor</keyword>
<keyword id="KW-1185">Reference proteome</keyword>
<keyword id="KW-0812">Transmembrane</keyword>
<keyword id="KW-1133">Transmembrane helix</keyword>
<keyword id="KW-0813">Transport</keyword>
<gene>
    <name type="primary">sigmar1</name>
    <name type="synonym">oprs1</name>
    <name type="ORF">zgc:56378</name>
</gene>
<name>SGMR1_DANRE</name>
<proteinExistence type="evidence at transcript level"/>
<feature type="chain" id="PRO_0000268658" description="Sigma non-opioid intracellular receptor 1">
    <location>
        <begin position="1"/>
        <end position="222"/>
    </location>
</feature>
<feature type="topological domain" description="Lumenal" evidence="5">
    <location>
        <begin position="1"/>
        <end position="6"/>
    </location>
</feature>
<feature type="transmembrane region" description="Helical" evidence="5">
    <location>
        <begin position="7"/>
        <end position="29"/>
    </location>
</feature>
<feature type="topological domain" description="Cytoplasmic" evidence="5">
    <location>
        <begin position="30"/>
        <end position="222"/>
    </location>
</feature>
<feature type="region of interest" description="Important for ligand-binding" evidence="4">
    <location>
        <begin position="97"/>
        <end position="104"/>
    </location>
</feature>
<feature type="region of interest" description="C-terminal hydrophobic region" evidence="6">
    <location>
        <begin position="175"/>
        <end position="222"/>
    </location>
</feature>
<feature type="site" description="Important for ligand binding" evidence="5">
    <location>
        <position position="124"/>
    </location>
</feature>
<feature type="site" description="Important for ligand binding" evidence="5">
    <location>
        <position position="170"/>
    </location>
</feature>
<comment type="function">
    <text evidence="1">May function in lipid transport from the endoplasmic reticulum and be involved in a wide array of cellular functions probably through regulation of the biogenesis of lipid microdomains at the plasma membrane. May regulate calcium efflux at the endoplasmic reticulum (By similarity).</text>
</comment>
<comment type="subunit">
    <text evidence="5">Homotrimer (By similarity).</text>
</comment>
<comment type="subcellular location">
    <subcellularLocation>
        <location evidence="5">Nucleus inner membrane</location>
    </subcellularLocation>
    <subcellularLocation>
        <location evidence="5">Nucleus outer membrane</location>
    </subcellularLocation>
    <subcellularLocation>
        <location evidence="5">Nucleus envelope</location>
    </subcellularLocation>
    <subcellularLocation>
        <location evidence="5">Cytoplasmic vesicle</location>
    </subcellularLocation>
    <subcellularLocation>
        <location evidence="5">Endoplasmic reticulum membrane</location>
    </subcellularLocation>
    <subcellularLocation>
        <location evidence="5">Membrane</location>
        <topology evidence="5">Single-pass membrane protein</topology>
    </subcellularLocation>
    <text evidence="2 5">During interphase, detected at the inner and outer nuclear membrane and the endoplasmic reticulum. Detected on cytoplasmic vesicles during mitosis (By similarity). Targeted to lipid droplets, cholesterol and galactosylceramide-enriched domains of the endoplasmic reticulum (By similarity).</text>
</comment>
<comment type="domain">
    <text evidence="5">The C-terminal helices form a flat, hydrophobic surface that is probably tightly associated with the cytosolic surface of the endoplasmic reticulum membrane.</text>
</comment>
<comment type="miscellaneous">
    <text evidence="3">Sigma receptors are classified into two subtypes (Sigma-1 and Sigma-2) based on their different pharmacological profile.</text>
</comment>
<comment type="similarity">
    <text evidence="6">Belongs to the ERG2 family.</text>
</comment>